<sequence length="58" mass="6796">MKRQKRDRLERARTKGYQAGLAGRSKELCPYQCIDARGYWLGGWRDAVDERSQGYMVN</sequence>
<protein>
    <recommendedName>
        <fullName evidence="1">Ribosome modulation factor</fullName>
        <shortName evidence="1">RMF</shortName>
    </recommendedName>
</protein>
<keyword id="KW-0963">Cytoplasm</keyword>
<keyword id="KW-1185">Reference proteome</keyword>
<keyword id="KW-0810">Translation regulation</keyword>
<feature type="chain" id="PRO_0000416483" description="Ribosome modulation factor">
    <location>
        <begin position="1"/>
        <end position="58"/>
    </location>
</feature>
<dbReference type="EMBL" id="CP001616">
    <property type="protein sequence ID" value="ACQ93036.1"/>
    <property type="molecule type" value="Genomic_DNA"/>
</dbReference>
<dbReference type="RefSeq" id="WP_015878508.1">
    <property type="nucleotide sequence ID" value="NC_012691.1"/>
</dbReference>
<dbReference type="SMR" id="C4LEL9"/>
<dbReference type="STRING" id="595494.Tola_1421"/>
<dbReference type="KEGG" id="tau:Tola_1421"/>
<dbReference type="eggNOG" id="COG3130">
    <property type="taxonomic scope" value="Bacteria"/>
</dbReference>
<dbReference type="HOGENOM" id="CLU_203350_0_0_6"/>
<dbReference type="OrthoDB" id="5917763at2"/>
<dbReference type="Proteomes" id="UP000009073">
    <property type="component" value="Chromosome"/>
</dbReference>
<dbReference type="GO" id="GO:0005737">
    <property type="term" value="C:cytoplasm"/>
    <property type="evidence" value="ECO:0007669"/>
    <property type="project" value="UniProtKB-SubCell"/>
</dbReference>
<dbReference type="GO" id="GO:0006417">
    <property type="term" value="P:regulation of translation"/>
    <property type="evidence" value="ECO:0007669"/>
    <property type="project" value="UniProtKB-UniRule"/>
</dbReference>
<dbReference type="Gene3D" id="1.10.10.620">
    <property type="entry name" value="ribosome modulation factor like domain"/>
    <property type="match status" value="1"/>
</dbReference>
<dbReference type="HAMAP" id="MF_00919">
    <property type="entry name" value="RMF"/>
    <property type="match status" value="1"/>
</dbReference>
<dbReference type="InterPro" id="IPR007040">
    <property type="entry name" value="Ribosome_modulation_factor"/>
</dbReference>
<dbReference type="InterPro" id="IPR023200">
    <property type="entry name" value="RMF_sf"/>
</dbReference>
<dbReference type="NCBIfam" id="NF011162">
    <property type="entry name" value="PRK14563.1"/>
    <property type="match status" value="1"/>
</dbReference>
<dbReference type="NCBIfam" id="NF041886">
    <property type="entry name" value="Rmf_CrpP_fam"/>
    <property type="match status" value="1"/>
</dbReference>
<dbReference type="Pfam" id="PF04957">
    <property type="entry name" value="RMF"/>
    <property type="match status" value="1"/>
</dbReference>
<comment type="function">
    <text evidence="1">During stationary phase, converts 70S ribosomes to an inactive dimeric form (100S ribosomes).</text>
</comment>
<comment type="subcellular location">
    <subcellularLocation>
        <location evidence="1">Cytoplasm</location>
    </subcellularLocation>
</comment>
<comment type="similarity">
    <text evidence="1">Belongs to the ribosome modulation factor family.</text>
</comment>
<name>RMF_TOLAT</name>
<evidence type="ECO:0000255" key="1">
    <source>
        <dbReference type="HAMAP-Rule" id="MF_00919"/>
    </source>
</evidence>
<reference key="1">
    <citation type="submission" date="2009-05" db="EMBL/GenBank/DDBJ databases">
        <title>Complete sequence of Tolumonas auensis DSM 9187.</title>
        <authorList>
            <consortium name="US DOE Joint Genome Institute"/>
            <person name="Lucas S."/>
            <person name="Copeland A."/>
            <person name="Lapidus A."/>
            <person name="Glavina del Rio T."/>
            <person name="Tice H."/>
            <person name="Bruce D."/>
            <person name="Goodwin L."/>
            <person name="Pitluck S."/>
            <person name="Chertkov O."/>
            <person name="Brettin T."/>
            <person name="Detter J.C."/>
            <person name="Han C."/>
            <person name="Larimer F."/>
            <person name="Land M."/>
            <person name="Hauser L."/>
            <person name="Kyrpides N."/>
            <person name="Mikhailova N."/>
            <person name="Spring S."/>
            <person name="Beller H."/>
        </authorList>
    </citation>
    <scope>NUCLEOTIDE SEQUENCE [LARGE SCALE GENOMIC DNA]</scope>
    <source>
        <strain>DSM 9187 / NBRC 110442 / TA 4</strain>
    </source>
</reference>
<organism>
    <name type="scientific">Tolumonas auensis (strain DSM 9187 / NBRC 110442 / TA 4)</name>
    <dbReference type="NCBI Taxonomy" id="595494"/>
    <lineage>
        <taxon>Bacteria</taxon>
        <taxon>Pseudomonadati</taxon>
        <taxon>Pseudomonadota</taxon>
        <taxon>Gammaproteobacteria</taxon>
        <taxon>Aeromonadales</taxon>
        <taxon>Aeromonadaceae</taxon>
        <taxon>Tolumonas</taxon>
    </lineage>
</organism>
<accession>C4LEL9</accession>
<gene>
    <name evidence="1" type="primary">rmf</name>
    <name type="ordered locus">Tola_1421</name>
</gene>
<proteinExistence type="inferred from homology"/>